<feature type="chain" id="PRO_0000155531" description="Ribosomal RNA large subunit methyltransferase E">
    <location>
        <begin position="1"/>
        <end position="237"/>
    </location>
</feature>
<feature type="active site" description="Proton acceptor" evidence="1">
    <location>
        <position position="179"/>
    </location>
</feature>
<feature type="binding site" evidence="1">
    <location>
        <position position="76"/>
    </location>
    <ligand>
        <name>S-adenosyl-L-methionine</name>
        <dbReference type="ChEBI" id="CHEBI:59789"/>
    </ligand>
</feature>
<feature type="binding site" evidence="1">
    <location>
        <position position="78"/>
    </location>
    <ligand>
        <name>S-adenosyl-L-methionine</name>
        <dbReference type="ChEBI" id="CHEBI:59789"/>
    </ligand>
</feature>
<feature type="binding site" evidence="1">
    <location>
        <position position="99"/>
    </location>
    <ligand>
        <name>S-adenosyl-L-methionine</name>
        <dbReference type="ChEBI" id="CHEBI:59789"/>
    </ligand>
</feature>
<feature type="binding site" evidence="1">
    <location>
        <position position="115"/>
    </location>
    <ligand>
        <name>S-adenosyl-L-methionine</name>
        <dbReference type="ChEBI" id="CHEBI:59789"/>
    </ligand>
</feature>
<feature type="binding site" evidence="1">
    <location>
        <position position="139"/>
    </location>
    <ligand>
        <name>S-adenosyl-L-methionine</name>
        <dbReference type="ChEBI" id="CHEBI:59789"/>
    </ligand>
</feature>
<gene>
    <name evidence="1" type="primary">rlmE</name>
    <name evidence="1" type="synonym">ftsJ</name>
    <name evidence="1" type="synonym">rrmJ</name>
    <name type="ordered locus">RPA2197</name>
</gene>
<keyword id="KW-0963">Cytoplasm</keyword>
<keyword id="KW-0489">Methyltransferase</keyword>
<keyword id="KW-0698">rRNA processing</keyword>
<keyword id="KW-0949">S-adenosyl-L-methionine</keyword>
<keyword id="KW-0808">Transferase</keyword>
<proteinExistence type="inferred from homology"/>
<evidence type="ECO:0000255" key="1">
    <source>
        <dbReference type="HAMAP-Rule" id="MF_01547"/>
    </source>
</evidence>
<organism>
    <name type="scientific">Rhodopseudomonas palustris (strain ATCC BAA-98 / CGA009)</name>
    <dbReference type="NCBI Taxonomy" id="258594"/>
    <lineage>
        <taxon>Bacteria</taxon>
        <taxon>Pseudomonadati</taxon>
        <taxon>Pseudomonadota</taxon>
        <taxon>Alphaproteobacteria</taxon>
        <taxon>Hyphomicrobiales</taxon>
        <taxon>Nitrobacteraceae</taxon>
        <taxon>Rhodopseudomonas</taxon>
    </lineage>
</organism>
<name>RLME_RHOPA</name>
<protein>
    <recommendedName>
        <fullName evidence="1">Ribosomal RNA large subunit methyltransferase E</fullName>
        <ecNumber evidence="1">2.1.1.166</ecNumber>
    </recommendedName>
    <alternativeName>
        <fullName evidence="1">23S rRNA Um2552 methyltransferase</fullName>
    </alternativeName>
    <alternativeName>
        <fullName evidence="1">rRNA (uridine-2'-O-)-methyltransferase</fullName>
    </alternativeName>
</protein>
<dbReference type="EC" id="2.1.1.166" evidence="1"/>
<dbReference type="EMBL" id="BX572600">
    <property type="protein sequence ID" value="CAE27638.1"/>
    <property type="molecule type" value="Genomic_DNA"/>
</dbReference>
<dbReference type="RefSeq" id="WP_011157752.1">
    <property type="nucleotide sequence ID" value="NZ_CP116810.1"/>
</dbReference>
<dbReference type="SMR" id="Q6N7Q9"/>
<dbReference type="STRING" id="258594.RPA2197"/>
<dbReference type="GeneID" id="66893248"/>
<dbReference type="eggNOG" id="COG0293">
    <property type="taxonomic scope" value="Bacteria"/>
</dbReference>
<dbReference type="HOGENOM" id="CLU_009422_4_0_5"/>
<dbReference type="PhylomeDB" id="Q6N7Q9"/>
<dbReference type="GO" id="GO:0005737">
    <property type="term" value="C:cytoplasm"/>
    <property type="evidence" value="ECO:0007669"/>
    <property type="project" value="UniProtKB-SubCell"/>
</dbReference>
<dbReference type="GO" id="GO:0008650">
    <property type="term" value="F:rRNA (uridine-2'-O-)-methyltransferase activity"/>
    <property type="evidence" value="ECO:0007669"/>
    <property type="project" value="UniProtKB-UniRule"/>
</dbReference>
<dbReference type="FunFam" id="3.40.50.150:FF:000005">
    <property type="entry name" value="Ribosomal RNA large subunit methyltransferase E"/>
    <property type="match status" value="1"/>
</dbReference>
<dbReference type="Gene3D" id="3.40.50.150">
    <property type="entry name" value="Vaccinia Virus protein VP39"/>
    <property type="match status" value="1"/>
</dbReference>
<dbReference type="HAMAP" id="MF_01547">
    <property type="entry name" value="RNA_methyltr_E"/>
    <property type="match status" value="1"/>
</dbReference>
<dbReference type="InterPro" id="IPR050082">
    <property type="entry name" value="RNA_methyltr_RlmE"/>
</dbReference>
<dbReference type="InterPro" id="IPR002877">
    <property type="entry name" value="RNA_MeTrfase_FtsJ_dom"/>
</dbReference>
<dbReference type="InterPro" id="IPR015507">
    <property type="entry name" value="rRNA-MeTfrase_E"/>
</dbReference>
<dbReference type="InterPro" id="IPR029063">
    <property type="entry name" value="SAM-dependent_MTases_sf"/>
</dbReference>
<dbReference type="PANTHER" id="PTHR10920">
    <property type="entry name" value="RIBOSOMAL RNA METHYLTRANSFERASE"/>
    <property type="match status" value="1"/>
</dbReference>
<dbReference type="PANTHER" id="PTHR10920:SF18">
    <property type="entry name" value="RRNA METHYLTRANSFERASE 2, MITOCHONDRIAL"/>
    <property type="match status" value="1"/>
</dbReference>
<dbReference type="Pfam" id="PF01728">
    <property type="entry name" value="FtsJ"/>
    <property type="match status" value="1"/>
</dbReference>
<dbReference type="PIRSF" id="PIRSF005461">
    <property type="entry name" value="23S_rRNA_mtase"/>
    <property type="match status" value="1"/>
</dbReference>
<dbReference type="SUPFAM" id="SSF53335">
    <property type="entry name" value="S-adenosyl-L-methionine-dependent methyltransferases"/>
    <property type="match status" value="1"/>
</dbReference>
<reference key="1">
    <citation type="journal article" date="2004" name="Nat. Biotechnol.">
        <title>Complete genome sequence of the metabolically versatile photosynthetic bacterium Rhodopseudomonas palustris.</title>
        <authorList>
            <person name="Larimer F.W."/>
            <person name="Chain P."/>
            <person name="Hauser L."/>
            <person name="Lamerdin J.E."/>
            <person name="Malfatti S."/>
            <person name="Do L."/>
            <person name="Land M.L."/>
            <person name="Pelletier D.A."/>
            <person name="Beatty J.T."/>
            <person name="Lang A.S."/>
            <person name="Tabita F.R."/>
            <person name="Gibson J.L."/>
            <person name="Hanson T.E."/>
            <person name="Bobst C."/>
            <person name="Torres y Torres J.L."/>
            <person name="Peres C."/>
            <person name="Harrison F.H."/>
            <person name="Gibson J."/>
            <person name="Harwood C.S."/>
        </authorList>
    </citation>
    <scope>NUCLEOTIDE SEQUENCE [LARGE SCALE GENOMIC DNA]</scope>
    <source>
        <strain>ATCC BAA-98 / CGA009</strain>
    </source>
</reference>
<comment type="function">
    <text evidence="1">Specifically methylates the uridine in position 2552 of 23S rRNA at the 2'-O position of the ribose in the fully assembled 50S ribosomal subunit.</text>
</comment>
<comment type="catalytic activity">
    <reaction evidence="1">
        <text>uridine(2552) in 23S rRNA + S-adenosyl-L-methionine = 2'-O-methyluridine(2552) in 23S rRNA + S-adenosyl-L-homocysteine + H(+)</text>
        <dbReference type="Rhea" id="RHEA:42720"/>
        <dbReference type="Rhea" id="RHEA-COMP:10202"/>
        <dbReference type="Rhea" id="RHEA-COMP:10203"/>
        <dbReference type="ChEBI" id="CHEBI:15378"/>
        <dbReference type="ChEBI" id="CHEBI:57856"/>
        <dbReference type="ChEBI" id="CHEBI:59789"/>
        <dbReference type="ChEBI" id="CHEBI:65315"/>
        <dbReference type="ChEBI" id="CHEBI:74478"/>
        <dbReference type="EC" id="2.1.1.166"/>
    </reaction>
</comment>
<comment type="subcellular location">
    <subcellularLocation>
        <location evidence="1">Cytoplasm</location>
    </subcellularLocation>
</comment>
<comment type="similarity">
    <text evidence="1">Belongs to the class I-like SAM-binding methyltransferase superfamily. RNA methyltransferase RlmE family.</text>
</comment>
<accession>Q6N7Q9</accession>
<sequence length="237" mass="25386">MAKDTTGRMRVTVKSGGRMKLSSKLWLERQLNDPYVAQAKRDGYRSRAAYKLTEIDDKFRLLKSGMAVVDLGAAPGGWSQVAAKKVGAADGRGKVVAIDLLEMGEVPGVTFAQLDFLDPSAPERLREMLGGGADIVMSDMAANTTGHRKTDQLRIVGLVETAAMFASEVLKPGGTFLAKVFQSGADASLMTELKRDYASVKHVKPAASRKDSSERYLLATGFRGGAARDAEAAAETE</sequence>